<sequence length="160" mass="17457">MTDTSNSLQDLGTLTGAPSAQPVKSVEPKIDAQGRAYGTGRRKEAVARVWIKPGSGKIIINGRDQETYFARPVLRMVIAQPLIEAGRATEFDVIATVKGSGLMGQAGAVRHGISRALVAYEPGLRAVLKPFGFMTRDPRVVERKKYGKAKARRSFQFSKR</sequence>
<organism>
    <name type="scientific">Hyphomonas neptunium (strain ATCC 15444)</name>
    <dbReference type="NCBI Taxonomy" id="228405"/>
    <lineage>
        <taxon>Bacteria</taxon>
        <taxon>Pseudomonadati</taxon>
        <taxon>Pseudomonadota</taxon>
        <taxon>Alphaproteobacteria</taxon>
        <taxon>Hyphomonadales</taxon>
        <taxon>Hyphomonadaceae</taxon>
        <taxon>Hyphomonas</taxon>
    </lineage>
</organism>
<comment type="similarity">
    <text evidence="1">Belongs to the universal ribosomal protein uS9 family.</text>
</comment>
<dbReference type="EMBL" id="CP000158">
    <property type="protein sequence ID" value="ABI78551.1"/>
    <property type="molecule type" value="Genomic_DNA"/>
</dbReference>
<dbReference type="RefSeq" id="WP_011647308.1">
    <property type="nucleotide sequence ID" value="NC_008358.1"/>
</dbReference>
<dbReference type="SMR" id="Q0BZT3"/>
<dbReference type="STRING" id="228405.HNE_2315"/>
<dbReference type="KEGG" id="hne:HNE_2315"/>
<dbReference type="eggNOG" id="COG0103">
    <property type="taxonomic scope" value="Bacteria"/>
</dbReference>
<dbReference type="HOGENOM" id="CLU_046483_2_0_5"/>
<dbReference type="Proteomes" id="UP000001959">
    <property type="component" value="Chromosome"/>
</dbReference>
<dbReference type="GO" id="GO:0022627">
    <property type="term" value="C:cytosolic small ribosomal subunit"/>
    <property type="evidence" value="ECO:0007669"/>
    <property type="project" value="TreeGrafter"/>
</dbReference>
<dbReference type="GO" id="GO:0003723">
    <property type="term" value="F:RNA binding"/>
    <property type="evidence" value="ECO:0007669"/>
    <property type="project" value="TreeGrafter"/>
</dbReference>
<dbReference type="GO" id="GO:0003735">
    <property type="term" value="F:structural constituent of ribosome"/>
    <property type="evidence" value="ECO:0007669"/>
    <property type="project" value="InterPro"/>
</dbReference>
<dbReference type="GO" id="GO:0006412">
    <property type="term" value="P:translation"/>
    <property type="evidence" value="ECO:0007669"/>
    <property type="project" value="UniProtKB-UniRule"/>
</dbReference>
<dbReference type="FunFam" id="3.30.230.10:FF:000001">
    <property type="entry name" value="30S ribosomal protein S9"/>
    <property type="match status" value="1"/>
</dbReference>
<dbReference type="Gene3D" id="3.30.230.10">
    <property type="match status" value="1"/>
</dbReference>
<dbReference type="HAMAP" id="MF_00532_B">
    <property type="entry name" value="Ribosomal_uS9_B"/>
    <property type="match status" value="1"/>
</dbReference>
<dbReference type="InterPro" id="IPR020568">
    <property type="entry name" value="Ribosomal_Su5_D2-typ_SF"/>
</dbReference>
<dbReference type="InterPro" id="IPR000754">
    <property type="entry name" value="Ribosomal_uS9"/>
</dbReference>
<dbReference type="InterPro" id="IPR023035">
    <property type="entry name" value="Ribosomal_uS9_bac/plastid"/>
</dbReference>
<dbReference type="InterPro" id="IPR014721">
    <property type="entry name" value="Ribsml_uS5_D2-typ_fold_subgr"/>
</dbReference>
<dbReference type="NCBIfam" id="NF001099">
    <property type="entry name" value="PRK00132.1"/>
    <property type="match status" value="1"/>
</dbReference>
<dbReference type="PANTHER" id="PTHR21569">
    <property type="entry name" value="RIBOSOMAL PROTEIN S9"/>
    <property type="match status" value="1"/>
</dbReference>
<dbReference type="PANTHER" id="PTHR21569:SF1">
    <property type="entry name" value="SMALL RIBOSOMAL SUBUNIT PROTEIN US9M"/>
    <property type="match status" value="1"/>
</dbReference>
<dbReference type="Pfam" id="PF00380">
    <property type="entry name" value="Ribosomal_S9"/>
    <property type="match status" value="1"/>
</dbReference>
<dbReference type="SUPFAM" id="SSF54211">
    <property type="entry name" value="Ribosomal protein S5 domain 2-like"/>
    <property type="match status" value="1"/>
</dbReference>
<evidence type="ECO:0000255" key="1">
    <source>
        <dbReference type="HAMAP-Rule" id="MF_00532"/>
    </source>
</evidence>
<evidence type="ECO:0000256" key="2">
    <source>
        <dbReference type="SAM" id="MobiDB-lite"/>
    </source>
</evidence>
<evidence type="ECO:0000305" key="3"/>
<accession>Q0BZT3</accession>
<name>RS9_HYPNA</name>
<proteinExistence type="inferred from homology"/>
<feature type="chain" id="PRO_1000051235" description="Small ribosomal subunit protein uS9">
    <location>
        <begin position="1"/>
        <end position="160"/>
    </location>
</feature>
<feature type="region of interest" description="Disordered" evidence="2">
    <location>
        <begin position="1"/>
        <end position="37"/>
    </location>
</feature>
<feature type="compositionally biased region" description="Polar residues" evidence="2">
    <location>
        <begin position="1"/>
        <end position="18"/>
    </location>
</feature>
<reference key="1">
    <citation type="journal article" date="2006" name="J. Bacteriol.">
        <title>Comparative genomic evidence for a close relationship between the dimorphic prosthecate bacteria Hyphomonas neptunium and Caulobacter crescentus.</title>
        <authorList>
            <person name="Badger J.H."/>
            <person name="Hoover T.R."/>
            <person name="Brun Y.V."/>
            <person name="Weiner R.M."/>
            <person name="Laub M.T."/>
            <person name="Alexandre G."/>
            <person name="Mrazek J."/>
            <person name="Ren Q."/>
            <person name="Paulsen I.T."/>
            <person name="Nelson K.E."/>
            <person name="Khouri H.M."/>
            <person name="Radune D."/>
            <person name="Sosa J."/>
            <person name="Dodson R.J."/>
            <person name="Sullivan S.A."/>
            <person name="Rosovitz M.J."/>
            <person name="Madupu R."/>
            <person name="Brinkac L.M."/>
            <person name="Durkin A.S."/>
            <person name="Daugherty S.C."/>
            <person name="Kothari S.P."/>
            <person name="Giglio M.G."/>
            <person name="Zhou L."/>
            <person name="Haft D.H."/>
            <person name="Selengut J.D."/>
            <person name="Davidsen T.M."/>
            <person name="Yang Q."/>
            <person name="Zafar N."/>
            <person name="Ward N.L."/>
        </authorList>
    </citation>
    <scope>NUCLEOTIDE SEQUENCE [LARGE SCALE GENOMIC DNA]</scope>
    <source>
        <strain>ATCC 15444</strain>
    </source>
</reference>
<protein>
    <recommendedName>
        <fullName evidence="1">Small ribosomal subunit protein uS9</fullName>
    </recommendedName>
    <alternativeName>
        <fullName evidence="3">30S ribosomal protein S9</fullName>
    </alternativeName>
</protein>
<gene>
    <name evidence="1" type="primary">rpsI</name>
    <name type="ordered locus">HNE_2315</name>
</gene>
<keyword id="KW-1185">Reference proteome</keyword>
<keyword id="KW-0687">Ribonucleoprotein</keyword>
<keyword id="KW-0689">Ribosomal protein</keyword>